<name>ISPG_PSYA2</name>
<keyword id="KW-0004">4Fe-4S</keyword>
<keyword id="KW-0408">Iron</keyword>
<keyword id="KW-0411">Iron-sulfur</keyword>
<keyword id="KW-0414">Isoprene biosynthesis</keyword>
<keyword id="KW-0479">Metal-binding</keyword>
<keyword id="KW-0560">Oxidoreductase</keyword>
<keyword id="KW-1185">Reference proteome</keyword>
<reference key="1">
    <citation type="journal article" date="2010" name="Appl. Environ. Microbiol.">
        <title>The genome sequence of Psychrobacter arcticus 273-4, a psychroactive Siberian permafrost bacterium, reveals mechanisms for adaptation to low-temperature growth.</title>
        <authorList>
            <person name="Ayala-del-Rio H.L."/>
            <person name="Chain P.S."/>
            <person name="Grzymski J.J."/>
            <person name="Ponder M.A."/>
            <person name="Ivanova N."/>
            <person name="Bergholz P.W."/>
            <person name="Di Bartolo G."/>
            <person name="Hauser L."/>
            <person name="Land M."/>
            <person name="Bakermans C."/>
            <person name="Rodrigues D."/>
            <person name="Klappenbach J."/>
            <person name="Zarka D."/>
            <person name="Larimer F."/>
            <person name="Richardson P."/>
            <person name="Murray A."/>
            <person name="Thomashow M."/>
            <person name="Tiedje J.M."/>
        </authorList>
    </citation>
    <scope>NUCLEOTIDE SEQUENCE [LARGE SCALE GENOMIC DNA]</scope>
    <source>
        <strain>DSM 17307 / VKM B-2377 / 273-4</strain>
    </source>
</reference>
<sequence>MSTSAPINRRLTKKIYVGDVAIGGDAPISVQSMTNTDTCDVAATVAQIERCVEAGADLMRVSTPTMDTVKAFGEIRKLVSVPLIADVHFDHKIALAVAAAGADCLRINPGNIGSDAKVREVVACAKHYNIPIRIGVNAGSLEKDIQRKYKEPNGAAMLESAMRHIDILERLNFDQYKVSVKASNVFLTMDAYRLISAQIDNPLHLGVTEAGVYRTGSVKSAIALGGLLLDGIGDTIRISLAAEPEEEIKIGFDILKSLNIRSNGVNFIACPSCSRQEFDVIRVMTALESRLEDIREPMNLSVIGCKVNGPGEAKEADIGIVGAAPKSLVYRMGEKSHLIDTDNLVDEIEGMVRAHAEELAKKRENEIIRVR</sequence>
<accession>Q4FTW7</accession>
<comment type="function">
    <text evidence="1">Converts 2C-methyl-D-erythritol 2,4-cyclodiphosphate (ME-2,4cPP) into 1-hydroxy-2-methyl-2-(E)-butenyl 4-diphosphate.</text>
</comment>
<comment type="catalytic activity">
    <reaction evidence="1">
        <text>(2E)-4-hydroxy-3-methylbut-2-enyl diphosphate + oxidized [flavodoxin] + H2O + 2 H(+) = 2-C-methyl-D-erythritol 2,4-cyclic diphosphate + reduced [flavodoxin]</text>
        <dbReference type="Rhea" id="RHEA:43604"/>
        <dbReference type="Rhea" id="RHEA-COMP:10622"/>
        <dbReference type="Rhea" id="RHEA-COMP:10623"/>
        <dbReference type="ChEBI" id="CHEBI:15377"/>
        <dbReference type="ChEBI" id="CHEBI:15378"/>
        <dbReference type="ChEBI" id="CHEBI:57618"/>
        <dbReference type="ChEBI" id="CHEBI:58210"/>
        <dbReference type="ChEBI" id="CHEBI:58483"/>
        <dbReference type="ChEBI" id="CHEBI:128753"/>
        <dbReference type="EC" id="1.17.7.3"/>
    </reaction>
</comment>
<comment type="cofactor">
    <cofactor evidence="1">
        <name>[4Fe-4S] cluster</name>
        <dbReference type="ChEBI" id="CHEBI:49883"/>
    </cofactor>
    <text evidence="1">Binds 1 [4Fe-4S] cluster.</text>
</comment>
<comment type="pathway">
    <text evidence="1">Isoprenoid biosynthesis; isopentenyl diphosphate biosynthesis via DXP pathway; isopentenyl diphosphate from 1-deoxy-D-xylulose 5-phosphate: step 5/6.</text>
</comment>
<comment type="similarity">
    <text evidence="1">Belongs to the IspG family.</text>
</comment>
<proteinExistence type="inferred from homology"/>
<feature type="chain" id="PRO_1000076892" description="4-hydroxy-3-methylbut-2-en-1-yl diphosphate synthase (flavodoxin)">
    <location>
        <begin position="1"/>
        <end position="371"/>
    </location>
</feature>
<feature type="binding site" evidence="1">
    <location>
        <position position="270"/>
    </location>
    <ligand>
        <name>[4Fe-4S] cluster</name>
        <dbReference type="ChEBI" id="CHEBI:49883"/>
    </ligand>
</feature>
<feature type="binding site" evidence="1">
    <location>
        <position position="273"/>
    </location>
    <ligand>
        <name>[4Fe-4S] cluster</name>
        <dbReference type="ChEBI" id="CHEBI:49883"/>
    </ligand>
</feature>
<feature type="binding site" evidence="1">
    <location>
        <position position="305"/>
    </location>
    <ligand>
        <name>[4Fe-4S] cluster</name>
        <dbReference type="ChEBI" id="CHEBI:49883"/>
    </ligand>
</feature>
<feature type="binding site" evidence="1">
    <location>
        <position position="312"/>
    </location>
    <ligand>
        <name>[4Fe-4S] cluster</name>
        <dbReference type="ChEBI" id="CHEBI:49883"/>
    </ligand>
</feature>
<protein>
    <recommendedName>
        <fullName evidence="1">4-hydroxy-3-methylbut-2-en-1-yl diphosphate synthase (flavodoxin)</fullName>
        <ecNumber evidence="1">1.17.7.3</ecNumber>
    </recommendedName>
    <alternativeName>
        <fullName evidence="1">1-hydroxy-2-methyl-2-(E)-butenyl 4-diphosphate synthase</fullName>
    </alternativeName>
</protein>
<dbReference type="EC" id="1.17.7.3" evidence="1"/>
<dbReference type="EMBL" id="CP000082">
    <property type="protein sequence ID" value="AAZ18541.1"/>
    <property type="molecule type" value="Genomic_DNA"/>
</dbReference>
<dbReference type="RefSeq" id="WP_011279968.1">
    <property type="nucleotide sequence ID" value="NC_007204.1"/>
</dbReference>
<dbReference type="SMR" id="Q4FTW7"/>
<dbReference type="STRING" id="259536.Psyc_0682"/>
<dbReference type="DNASU" id="3516142"/>
<dbReference type="KEGG" id="par:Psyc_0682"/>
<dbReference type="eggNOG" id="COG0821">
    <property type="taxonomic scope" value="Bacteria"/>
</dbReference>
<dbReference type="HOGENOM" id="CLU_042258_0_0_6"/>
<dbReference type="OrthoDB" id="9803214at2"/>
<dbReference type="UniPathway" id="UPA00056">
    <property type="reaction ID" value="UER00096"/>
</dbReference>
<dbReference type="Proteomes" id="UP000000546">
    <property type="component" value="Chromosome"/>
</dbReference>
<dbReference type="GO" id="GO:0051539">
    <property type="term" value="F:4 iron, 4 sulfur cluster binding"/>
    <property type="evidence" value="ECO:0007669"/>
    <property type="project" value="UniProtKB-UniRule"/>
</dbReference>
<dbReference type="GO" id="GO:0046429">
    <property type="term" value="F:4-hydroxy-3-methylbut-2-en-1-yl diphosphate synthase activity (ferredoxin)"/>
    <property type="evidence" value="ECO:0007669"/>
    <property type="project" value="UniProtKB-UniRule"/>
</dbReference>
<dbReference type="GO" id="GO:0141197">
    <property type="term" value="F:4-hydroxy-3-methylbut-2-enyl-diphosphate synthase activity (flavodoxin)"/>
    <property type="evidence" value="ECO:0007669"/>
    <property type="project" value="UniProtKB-EC"/>
</dbReference>
<dbReference type="GO" id="GO:0005506">
    <property type="term" value="F:iron ion binding"/>
    <property type="evidence" value="ECO:0007669"/>
    <property type="project" value="InterPro"/>
</dbReference>
<dbReference type="GO" id="GO:0019288">
    <property type="term" value="P:isopentenyl diphosphate biosynthetic process, methylerythritol 4-phosphate pathway"/>
    <property type="evidence" value="ECO:0007669"/>
    <property type="project" value="UniProtKB-UniRule"/>
</dbReference>
<dbReference type="GO" id="GO:0016114">
    <property type="term" value="P:terpenoid biosynthetic process"/>
    <property type="evidence" value="ECO:0007669"/>
    <property type="project" value="InterPro"/>
</dbReference>
<dbReference type="FunFam" id="3.20.20.20:FF:000001">
    <property type="entry name" value="4-hydroxy-3-methylbut-2-en-1-yl diphosphate synthase (flavodoxin)"/>
    <property type="match status" value="1"/>
</dbReference>
<dbReference type="Gene3D" id="3.20.20.20">
    <property type="entry name" value="Dihydropteroate synthase-like"/>
    <property type="match status" value="1"/>
</dbReference>
<dbReference type="Gene3D" id="3.30.413.10">
    <property type="entry name" value="Sulfite Reductase Hemoprotein, domain 1"/>
    <property type="match status" value="1"/>
</dbReference>
<dbReference type="HAMAP" id="MF_00159">
    <property type="entry name" value="IspG"/>
    <property type="match status" value="1"/>
</dbReference>
<dbReference type="InterPro" id="IPR011005">
    <property type="entry name" value="Dihydropteroate_synth-like_sf"/>
</dbReference>
<dbReference type="InterPro" id="IPR016425">
    <property type="entry name" value="IspG_bac"/>
</dbReference>
<dbReference type="InterPro" id="IPR004588">
    <property type="entry name" value="IspG_bac-typ"/>
</dbReference>
<dbReference type="InterPro" id="IPR045854">
    <property type="entry name" value="NO2/SO3_Rdtase_4Fe4S_sf"/>
</dbReference>
<dbReference type="NCBIfam" id="TIGR00612">
    <property type="entry name" value="ispG_gcpE"/>
    <property type="match status" value="1"/>
</dbReference>
<dbReference type="NCBIfam" id="NF001540">
    <property type="entry name" value="PRK00366.1"/>
    <property type="match status" value="1"/>
</dbReference>
<dbReference type="PANTHER" id="PTHR30454">
    <property type="entry name" value="4-HYDROXY-3-METHYLBUT-2-EN-1-YL DIPHOSPHATE SYNTHASE"/>
    <property type="match status" value="1"/>
</dbReference>
<dbReference type="PANTHER" id="PTHR30454:SF0">
    <property type="entry name" value="4-HYDROXY-3-METHYLBUT-2-EN-1-YL DIPHOSPHATE SYNTHASE (FERREDOXIN), CHLOROPLASTIC"/>
    <property type="match status" value="1"/>
</dbReference>
<dbReference type="Pfam" id="PF04551">
    <property type="entry name" value="GcpE"/>
    <property type="match status" value="1"/>
</dbReference>
<dbReference type="PIRSF" id="PIRSF004640">
    <property type="entry name" value="IspG"/>
    <property type="match status" value="1"/>
</dbReference>
<dbReference type="SUPFAM" id="SSF51717">
    <property type="entry name" value="Dihydropteroate synthetase-like"/>
    <property type="match status" value="1"/>
</dbReference>
<dbReference type="SUPFAM" id="SSF56014">
    <property type="entry name" value="Nitrite and sulphite reductase 4Fe-4S domain-like"/>
    <property type="match status" value="1"/>
</dbReference>
<evidence type="ECO:0000255" key="1">
    <source>
        <dbReference type="HAMAP-Rule" id="MF_00159"/>
    </source>
</evidence>
<organism>
    <name type="scientific">Psychrobacter arcticus (strain DSM 17307 / VKM B-2377 / 273-4)</name>
    <dbReference type="NCBI Taxonomy" id="259536"/>
    <lineage>
        <taxon>Bacteria</taxon>
        <taxon>Pseudomonadati</taxon>
        <taxon>Pseudomonadota</taxon>
        <taxon>Gammaproteobacteria</taxon>
        <taxon>Moraxellales</taxon>
        <taxon>Moraxellaceae</taxon>
        <taxon>Psychrobacter</taxon>
    </lineage>
</organism>
<gene>
    <name evidence="1" type="primary">ispG</name>
    <name type="ordered locus">Psyc_0682</name>
</gene>